<protein>
    <recommendedName>
        <fullName>Heat shock protein beta-8</fullName>
        <shortName>HspB8</shortName>
    </recommendedName>
    <alternativeName>
        <fullName>Protein kinase H11</fullName>
    </alternativeName>
</protein>
<proteinExistence type="evidence at transcript level"/>
<comment type="function">
    <text evidence="3">Involved in the chaperone-assisted selective autophagy (CASA), a crucial process for protein quality control, particularly in mechanical strained cells and tissues such as muscle. Displays temperature-dependent chaperone activity.</text>
</comment>
<comment type="subunit">
    <text evidence="3 4">Monomer (By similarity). Forms a ternary complex with BAG3 and HSPA1A (By similarity). Component of the chaperone-assisted selective autophagy (CASA) complex consisting of BAG3, HSPA8/HSC70, HSPB8 and STUB1/CHIP (By similarity). Interacts with HSPB1 (By similarity). Interacts with DNAJB6 (By similarity). Interacts with BAG3 (By similarity).</text>
</comment>
<comment type="subcellular location">
    <subcellularLocation>
        <location evidence="4">Cytoplasm</location>
    </subcellularLocation>
    <subcellularLocation>
        <location evidence="4">Nucleus</location>
    </subcellularLocation>
    <text evidence="4">Translocates to nuclear foci during heat shock.</text>
</comment>
<comment type="PTM">
    <text evidence="1">Phosphorylated.</text>
</comment>
<comment type="similarity">
    <text evidence="5">Belongs to the small heat shock protein (HSP20) family.</text>
</comment>
<dbReference type="EMBL" id="AF525493">
    <property type="protein sequence ID" value="AAM90297.1"/>
    <property type="molecule type" value="mRNA"/>
</dbReference>
<dbReference type="RefSeq" id="NP_001003029.1">
    <property type="nucleotide sequence ID" value="NM_001003029.1"/>
</dbReference>
<dbReference type="SMR" id="Q8MJ36"/>
<dbReference type="FunCoup" id="Q8MJ36">
    <property type="interactions" value="11"/>
</dbReference>
<dbReference type="STRING" id="9615.ENSCAFP00000041782"/>
<dbReference type="PaxDb" id="9612-ENSCAFP00000041782"/>
<dbReference type="GeneID" id="403553"/>
<dbReference type="KEGG" id="cfa:403553"/>
<dbReference type="CTD" id="26353"/>
<dbReference type="eggNOG" id="KOG3591">
    <property type="taxonomic scope" value="Eukaryota"/>
</dbReference>
<dbReference type="InParanoid" id="Q8MJ36"/>
<dbReference type="OrthoDB" id="10060792at2759"/>
<dbReference type="Proteomes" id="UP000002254">
    <property type="component" value="Unplaced"/>
</dbReference>
<dbReference type="Proteomes" id="UP000694429">
    <property type="component" value="Unplaced"/>
</dbReference>
<dbReference type="Proteomes" id="UP000694542">
    <property type="component" value="Unplaced"/>
</dbReference>
<dbReference type="Proteomes" id="UP000805418">
    <property type="component" value="Unplaced"/>
</dbReference>
<dbReference type="GO" id="GO:0005737">
    <property type="term" value="C:cytoplasm"/>
    <property type="evidence" value="ECO:0000250"/>
    <property type="project" value="UniProtKB"/>
</dbReference>
<dbReference type="GO" id="GO:0005634">
    <property type="term" value="C:nucleus"/>
    <property type="evidence" value="ECO:0000250"/>
    <property type="project" value="UniProtKB"/>
</dbReference>
<dbReference type="GO" id="GO:0101031">
    <property type="term" value="C:protein folding chaperone complex"/>
    <property type="evidence" value="ECO:0000318"/>
    <property type="project" value="GO_Central"/>
</dbReference>
<dbReference type="GO" id="GO:0042803">
    <property type="term" value="F:protein homodimerization activity"/>
    <property type="evidence" value="ECO:0007669"/>
    <property type="project" value="InterPro"/>
</dbReference>
<dbReference type="GO" id="GO:0034620">
    <property type="term" value="P:cellular response to unfolded protein"/>
    <property type="evidence" value="ECO:0000318"/>
    <property type="project" value="GO_Central"/>
</dbReference>
<dbReference type="CDD" id="cd06480">
    <property type="entry name" value="ACD_HspB8_like"/>
    <property type="match status" value="1"/>
</dbReference>
<dbReference type="FunFam" id="2.60.40.790:FF:000028">
    <property type="entry name" value="Heat shock protein beta-8"/>
    <property type="match status" value="1"/>
</dbReference>
<dbReference type="Gene3D" id="2.60.40.790">
    <property type="match status" value="1"/>
</dbReference>
<dbReference type="InterPro" id="IPR002068">
    <property type="entry name" value="A-crystallin/Hsp20_dom"/>
</dbReference>
<dbReference type="InterPro" id="IPR001436">
    <property type="entry name" value="Alpha-crystallin/sHSP_animal"/>
</dbReference>
<dbReference type="InterPro" id="IPR008978">
    <property type="entry name" value="HSP20-like_chaperone"/>
</dbReference>
<dbReference type="InterPro" id="IPR043254">
    <property type="entry name" value="HSPB8"/>
</dbReference>
<dbReference type="InterPro" id="IPR042790">
    <property type="entry name" value="HspB8_ACD"/>
</dbReference>
<dbReference type="PANTHER" id="PTHR46906">
    <property type="entry name" value="HEAT SHOCK PROTEIN BETA-8"/>
    <property type="match status" value="1"/>
</dbReference>
<dbReference type="PANTHER" id="PTHR46906:SF1">
    <property type="entry name" value="HEAT SHOCK PROTEIN BETA-8"/>
    <property type="match status" value="1"/>
</dbReference>
<dbReference type="Pfam" id="PF00011">
    <property type="entry name" value="HSP20"/>
    <property type="match status" value="1"/>
</dbReference>
<dbReference type="PRINTS" id="PR00299">
    <property type="entry name" value="ACRYSTALLIN"/>
</dbReference>
<dbReference type="SUPFAM" id="SSF49764">
    <property type="entry name" value="HSP20-like chaperones"/>
    <property type="match status" value="1"/>
</dbReference>
<dbReference type="PROSITE" id="PS01031">
    <property type="entry name" value="SHSP"/>
    <property type="match status" value="1"/>
</dbReference>
<sequence length="196" mass="21760">MADGQMPFSCHYPSRLRRDPFRDSPLPSRLLDDDFGMDPFPDDLTSSWRNWALPRFSTGWPGTLRSGMVPRGPTAAARFGVPAEGRSPPPFPGEPWKVCVNVHSFKPEELMVKTKDGYVEVSGKHEEKQQEGGIVSKNFTKKIQLPAEVDPVTVFASLSPEGLLIIEAPQVPPYSPFGESNFNNELPQDSQEVTCT</sequence>
<accession>Q8MJ36</accession>
<evidence type="ECO:0000250" key="1"/>
<evidence type="ECO:0000250" key="2">
    <source>
        <dbReference type="UniProtKB" id="Q9EPX0"/>
    </source>
</evidence>
<evidence type="ECO:0000250" key="3">
    <source>
        <dbReference type="UniProtKB" id="Q9JK92"/>
    </source>
</evidence>
<evidence type="ECO:0000250" key="4">
    <source>
        <dbReference type="UniProtKB" id="Q9UJY1"/>
    </source>
</evidence>
<evidence type="ECO:0000255" key="5">
    <source>
        <dbReference type="PROSITE-ProRule" id="PRU00285"/>
    </source>
</evidence>
<evidence type="ECO:0000256" key="6">
    <source>
        <dbReference type="SAM" id="MobiDB-lite"/>
    </source>
</evidence>
<name>HSPB8_CANLF</name>
<gene>
    <name type="primary">HSPB8</name>
</gene>
<reference key="1">
    <citation type="submission" date="2002-06" db="EMBL/GenBank/DDBJ databases">
        <authorList>
            <person name="Wang L."/>
            <person name="Depre C."/>
        </authorList>
    </citation>
    <scope>NUCLEOTIDE SEQUENCE [MRNA]</scope>
</reference>
<keyword id="KW-0143">Chaperone</keyword>
<keyword id="KW-0963">Cytoplasm</keyword>
<keyword id="KW-0488">Methylation</keyword>
<keyword id="KW-0539">Nucleus</keyword>
<keyword id="KW-0597">Phosphoprotein</keyword>
<keyword id="KW-1185">Reference proteome</keyword>
<keyword id="KW-0346">Stress response</keyword>
<feature type="chain" id="PRO_0000252668" description="Heat shock protein beta-8">
    <location>
        <begin position="1"/>
        <end position="196"/>
    </location>
</feature>
<feature type="domain" description="sHSP" evidence="5">
    <location>
        <begin position="74"/>
        <end position="185"/>
    </location>
</feature>
<feature type="region of interest" description="Disordered" evidence="6">
    <location>
        <begin position="1"/>
        <end position="35"/>
    </location>
</feature>
<feature type="region of interest" description="Disordered" evidence="6">
    <location>
        <begin position="176"/>
        <end position="196"/>
    </location>
</feature>
<feature type="compositionally biased region" description="Polar residues" evidence="6">
    <location>
        <begin position="178"/>
        <end position="196"/>
    </location>
</feature>
<feature type="modified residue" description="Phosphoserine" evidence="4">
    <location>
        <position position="24"/>
    </location>
</feature>
<feature type="modified residue" description="Phosphoserine" evidence="2">
    <location>
        <position position="57"/>
    </location>
</feature>
<feature type="modified residue" description="Phosphothreonine" evidence="4">
    <location>
        <position position="63"/>
    </location>
</feature>
<feature type="modified residue" description="Asymmetric dimethylarginine" evidence="3">
    <location>
        <position position="71"/>
    </location>
</feature>
<feature type="modified residue" description="Asymmetric dimethylarginine" evidence="3">
    <location>
        <position position="78"/>
    </location>
</feature>
<feature type="modified residue" description="Phosphoserine" evidence="3">
    <location>
        <position position="87"/>
    </location>
</feature>
<organism>
    <name type="scientific">Canis lupus familiaris</name>
    <name type="common">Dog</name>
    <name type="synonym">Canis familiaris</name>
    <dbReference type="NCBI Taxonomy" id="9615"/>
    <lineage>
        <taxon>Eukaryota</taxon>
        <taxon>Metazoa</taxon>
        <taxon>Chordata</taxon>
        <taxon>Craniata</taxon>
        <taxon>Vertebrata</taxon>
        <taxon>Euteleostomi</taxon>
        <taxon>Mammalia</taxon>
        <taxon>Eutheria</taxon>
        <taxon>Laurasiatheria</taxon>
        <taxon>Carnivora</taxon>
        <taxon>Caniformia</taxon>
        <taxon>Canidae</taxon>
        <taxon>Canis</taxon>
    </lineage>
</organism>